<accession>Q9TSX4</accession>
<dbReference type="EMBL" id="AF084633">
    <property type="protein sequence ID" value="AAF21793.1"/>
    <property type="molecule type" value="Genomic_DNA"/>
</dbReference>
<dbReference type="EMBL" id="AF084631">
    <property type="protein sequence ID" value="AAF21793.1"/>
    <property type="status" value="JOINED"/>
    <property type="molecule type" value="Genomic_DNA"/>
</dbReference>
<dbReference type="EMBL" id="AF084632">
    <property type="protein sequence ID" value="AAF21793.1"/>
    <property type="status" value="JOINED"/>
    <property type="molecule type" value="Genomic_DNA"/>
</dbReference>
<dbReference type="SMR" id="Q9TSX4"/>
<dbReference type="GO" id="GO:0005576">
    <property type="term" value="C:extracellular region"/>
    <property type="evidence" value="ECO:0007669"/>
    <property type="project" value="UniProtKB-SubCell"/>
</dbReference>
<dbReference type="GO" id="GO:0042612">
    <property type="term" value="C:MHC class I protein complex"/>
    <property type="evidence" value="ECO:0007669"/>
    <property type="project" value="UniProtKB-KW"/>
</dbReference>
<dbReference type="GO" id="GO:0002474">
    <property type="term" value="P:antigen processing and presentation of peptide antigen via MHC class I"/>
    <property type="evidence" value="ECO:0007669"/>
    <property type="project" value="UniProtKB-KW"/>
</dbReference>
<dbReference type="GO" id="GO:0006955">
    <property type="term" value="P:immune response"/>
    <property type="evidence" value="ECO:0007669"/>
    <property type="project" value="InterPro"/>
</dbReference>
<dbReference type="CDD" id="cd05770">
    <property type="entry name" value="IgC1_beta2m"/>
    <property type="match status" value="1"/>
</dbReference>
<dbReference type="FunFam" id="2.60.40.10:FF:001005">
    <property type="entry name" value="Beta-2-microglobulin"/>
    <property type="match status" value="1"/>
</dbReference>
<dbReference type="Gene3D" id="2.60.40.10">
    <property type="entry name" value="Immunoglobulins"/>
    <property type="match status" value="1"/>
</dbReference>
<dbReference type="InterPro" id="IPR015707">
    <property type="entry name" value="B2Microglobulin"/>
</dbReference>
<dbReference type="InterPro" id="IPR007110">
    <property type="entry name" value="Ig-like_dom"/>
</dbReference>
<dbReference type="InterPro" id="IPR036179">
    <property type="entry name" value="Ig-like_dom_sf"/>
</dbReference>
<dbReference type="InterPro" id="IPR013783">
    <property type="entry name" value="Ig-like_fold"/>
</dbReference>
<dbReference type="InterPro" id="IPR003006">
    <property type="entry name" value="Ig/MHC_CS"/>
</dbReference>
<dbReference type="InterPro" id="IPR003597">
    <property type="entry name" value="Ig_C1-set"/>
</dbReference>
<dbReference type="InterPro" id="IPR050160">
    <property type="entry name" value="MHC/Immunoglobulin"/>
</dbReference>
<dbReference type="PANTHER" id="PTHR19944:SF62">
    <property type="entry name" value="BETA-2-MICROGLOBULIN"/>
    <property type="match status" value="1"/>
</dbReference>
<dbReference type="PANTHER" id="PTHR19944">
    <property type="entry name" value="MHC CLASS II-RELATED"/>
    <property type="match status" value="1"/>
</dbReference>
<dbReference type="Pfam" id="PF07654">
    <property type="entry name" value="C1-set"/>
    <property type="match status" value="1"/>
</dbReference>
<dbReference type="SMART" id="SM00407">
    <property type="entry name" value="IGc1"/>
    <property type="match status" value="1"/>
</dbReference>
<dbReference type="SUPFAM" id="SSF48726">
    <property type="entry name" value="Immunoglobulin"/>
    <property type="match status" value="1"/>
</dbReference>
<dbReference type="PROSITE" id="PS50835">
    <property type="entry name" value="IG_LIKE"/>
    <property type="match status" value="1"/>
</dbReference>
<dbReference type="PROSITE" id="PS00290">
    <property type="entry name" value="IG_MHC"/>
    <property type="match status" value="1"/>
</dbReference>
<organism>
    <name type="scientific">Leontocebus fuscicollis</name>
    <name type="common">Brown-mantled tamarin</name>
    <name type="synonym">Saguinus fuscicollis</name>
    <dbReference type="NCBI Taxonomy" id="9487"/>
    <lineage>
        <taxon>Eukaryota</taxon>
        <taxon>Metazoa</taxon>
        <taxon>Chordata</taxon>
        <taxon>Craniata</taxon>
        <taxon>Vertebrata</taxon>
        <taxon>Euteleostomi</taxon>
        <taxon>Mammalia</taxon>
        <taxon>Eutheria</taxon>
        <taxon>Euarchontoglires</taxon>
        <taxon>Primates</taxon>
        <taxon>Haplorrhini</taxon>
        <taxon>Platyrrhini</taxon>
        <taxon>Cebidae</taxon>
        <taxon>Callitrichinae</taxon>
        <taxon>Leontocebus</taxon>
    </lineage>
</organism>
<proteinExistence type="inferred from homology"/>
<gene>
    <name type="primary">B2M</name>
</gene>
<comment type="function">
    <text evidence="1">Component of the class I major histocompatibility complex (MHC). Involved in the presentation of peptide antigens to the immune system (By similarity).</text>
</comment>
<comment type="subunit">
    <text evidence="1">Heterodimer of an alpha chain and a beta chain. Beta-2-microglobulin is the beta-chain of major histocompatibility complex class I molecules (By similarity).</text>
</comment>
<comment type="subcellular location">
    <subcellularLocation>
        <location evidence="1">Secreted</location>
    </subcellularLocation>
</comment>
<comment type="similarity">
    <text evidence="3">Belongs to the beta-2-microglobulin family.</text>
</comment>
<evidence type="ECO:0000250" key="1"/>
<evidence type="ECO:0000255" key="2">
    <source>
        <dbReference type="PROSITE-ProRule" id="PRU00114"/>
    </source>
</evidence>
<evidence type="ECO:0000305" key="3"/>
<name>B2MG_LEOFU</name>
<sequence>MARFVVVALLVLLSVSDLEAIQHPPKIQVYSRYPADNGKPNFLNCYVSGFHPSDIEVDLLKNGKKIEKVEHSDLSFSKDWSFYLLYYTEFTPNEKDEYACRVSHVTFLTPKTVKWDRNM</sequence>
<reference key="1">
    <citation type="journal article" date="1999" name="Am. J. Primatol.">
        <title>Phylogenetic relationships of the Callitrichinae (Platyrrhini, primates) based on beta2-microglobulin DNA sequences.</title>
        <authorList>
            <person name="Canavez F.C."/>
            <person name="Moreira M.A.M."/>
            <person name="Simon F."/>
            <person name="Parham P."/>
            <person name="Seuanez H.N."/>
        </authorList>
    </citation>
    <scope>NUCLEOTIDE SEQUENCE [GENOMIC DNA]</scope>
</reference>
<keyword id="KW-1015">Disulfide bond</keyword>
<keyword id="KW-0391">Immunity</keyword>
<keyword id="KW-0393">Immunoglobulin domain</keyword>
<keyword id="KW-0490">MHC I</keyword>
<keyword id="KW-0964">Secreted</keyword>
<keyword id="KW-0732">Signal</keyword>
<protein>
    <recommendedName>
        <fullName>Beta-2-microglobulin</fullName>
    </recommendedName>
</protein>
<feature type="signal peptide" evidence="1">
    <location>
        <begin position="1"/>
        <end position="20"/>
    </location>
</feature>
<feature type="chain" id="PRO_0000018793" description="Beta-2-microglobulin">
    <location>
        <begin position="21"/>
        <end position="119"/>
    </location>
</feature>
<feature type="domain" description="Ig-like C1-type">
    <location>
        <begin position="25"/>
        <end position="114"/>
    </location>
</feature>
<feature type="disulfide bond" evidence="2">
    <location>
        <begin position="45"/>
        <end position="100"/>
    </location>
</feature>